<gene>
    <name evidence="12" type="primary">SVP</name>
    <name evidence="15" type="ordered locus">At2g22540</name>
    <name evidence="16" type="ORF">F14M13.6</name>
</gene>
<dbReference type="EMBL" id="AF211171">
    <property type="protein sequence ID" value="AAG24508.1"/>
    <property type="molecule type" value="mRNA"/>
</dbReference>
<dbReference type="EMBL" id="EU078686">
    <property type="protein sequence ID" value="ABU95407.1"/>
    <property type="molecule type" value="mRNA"/>
</dbReference>
<dbReference type="EMBL" id="AC006592">
    <property type="protein sequence ID" value="AAD22365.1"/>
    <property type="status" value="ALT_SEQ"/>
    <property type="molecule type" value="Genomic_DNA"/>
</dbReference>
<dbReference type="EMBL" id="CP002685">
    <property type="protein sequence ID" value="AEC07320.1"/>
    <property type="molecule type" value="Genomic_DNA"/>
</dbReference>
<dbReference type="EMBL" id="CP002685">
    <property type="protein sequence ID" value="AEC07321.1"/>
    <property type="molecule type" value="Genomic_DNA"/>
</dbReference>
<dbReference type="EMBL" id="CP002685">
    <property type="protein sequence ID" value="ANM62426.1"/>
    <property type="molecule type" value="Genomic_DNA"/>
</dbReference>
<dbReference type="RefSeq" id="NP_001154528.1">
    <molecule id="Q9FVC1-3"/>
    <property type="nucleotide sequence ID" value="NM_001161056.1"/>
</dbReference>
<dbReference type="RefSeq" id="NP_001324584.1">
    <molecule id="Q9FVC1-1"/>
    <property type="nucleotide sequence ID" value="NM_001335800.1"/>
</dbReference>
<dbReference type="RefSeq" id="NP_179840.2">
    <molecule id="Q9FVC1-1"/>
    <property type="nucleotide sequence ID" value="NM_127820.4"/>
</dbReference>
<dbReference type="PDB" id="7XGS">
    <property type="method" value="X-ray"/>
    <property type="resolution" value="2.21 A"/>
    <property type="chains" value="A=74-174"/>
</dbReference>
<dbReference type="PDBsum" id="7XGS"/>
<dbReference type="SMR" id="Q9FVC1"/>
<dbReference type="BioGRID" id="2140">
    <property type="interactions" value="30"/>
</dbReference>
<dbReference type="DIP" id="DIP-33797N"/>
<dbReference type="FunCoup" id="Q9FVC1">
    <property type="interactions" value="102"/>
</dbReference>
<dbReference type="IntAct" id="Q9FVC1">
    <property type="interactions" value="26"/>
</dbReference>
<dbReference type="STRING" id="3702.Q9FVC1"/>
<dbReference type="PaxDb" id="3702-AT2G22540.1"/>
<dbReference type="ProteomicsDB" id="226795">
    <molecule id="Q9FVC1-1"/>
</dbReference>
<dbReference type="EnsemblPlants" id="AT2G22540.1">
    <molecule id="Q9FVC1-1"/>
    <property type="protein sequence ID" value="AT2G22540.1"/>
    <property type="gene ID" value="AT2G22540"/>
</dbReference>
<dbReference type="EnsemblPlants" id="AT2G22540.2">
    <molecule id="Q9FVC1-3"/>
    <property type="protein sequence ID" value="AT2G22540.2"/>
    <property type="gene ID" value="AT2G22540"/>
</dbReference>
<dbReference type="EnsemblPlants" id="AT2G22540.3">
    <molecule id="Q9FVC1-1"/>
    <property type="protein sequence ID" value="AT2G22540.3"/>
    <property type="gene ID" value="AT2G22540"/>
</dbReference>
<dbReference type="GeneID" id="816787"/>
<dbReference type="Gramene" id="AT2G22540.1">
    <molecule id="Q9FVC1-1"/>
    <property type="protein sequence ID" value="AT2G22540.1"/>
    <property type="gene ID" value="AT2G22540"/>
</dbReference>
<dbReference type="Gramene" id="AT2G22540.2">
    <molecule id="Q9FVC1-3"/>
    <property type="protein sequence ID" value="AT2G22540.2"/>
    <property type="gene ID" value="AT2G22540"/>
</dbReference>
<dbReference type="Gramene" id="AT2G22540.3">
    <molecule id="Q9FVC1-1"/>
    <property type="protein sequence ID" value="AT2G22540.3"/>
    <property type="gene ID" value="AT2G22540"/>
</dbReference>
<dbReference type="KEGG" id="ath:AT2G22540"/>
<dbReference type="Araport" id="AT2G22540"/>
<dbReference type="TAIR" id="AT2G22540">
    <property type="gene designation" value="SVP"/>
</dbReference>
<dbReference type="eggNOG" id="KOG0014">
    <property type="taxonomic scope" value="Eukaryota"/>
</dbReference>
<dbReference type="HOGENOM" id="CLU_053053_14_1_1"/>
<dbReference type="InParanoid" id="Q9FVC1"/>
<dbReference type="OMA" id="QIYNNVH"/>
<dbReference type="OrthoDB" id="1898716at2759"/>
<dbReference type="PhylomeDB" id="Q9FVC1"/>
<dbReference type="PRO" id="PR:Q9FVC1"/>
<dbReference type="Proteomes" id="UP000006548">
    <property type="component" value="Chromosome 2"/>
</dbReference>
<dbReference type="ExpressionAtlas" id="Q9FVC1">
    <property type="expression patterns" value="baseline and differential"/>
</dbReference>
<dbReference type="GO" id="GO:0005634">
    <property type="term" value="C:nucleus"/>
    <property type="evidence" value="ECO:0000314"/>
    <property type="project" value="TAIR"/>
</dbReference>
<dbReference type="GO" id="GO:0003700">
    <property type="term" value="F:DNA-binding transcription factor activity"/>
    <property type="evidence" value="ECO:0000250"/>
    <property type="project" value="TAIR"/>
</dbReference>
<dbReference type="GO" id="GO:0000900">
    <property type="term" value="F:mRNA regulatory element binding translation repressor activity"/>
    <property type="evidence" value="ECO:0000314"/>
    <property type="project" value="TAIR"/>
</dbReference>
<dbReference type="GO" id="GO:0046983">
    <property type="term" value="F:protein dimerization activity"/>
    <property type="evidence" value="ECO:0007669"/>
    <property type="project" value="InterPro"/>
</dbReference>
<dbReference type="GO" id="GO:0000977">
    <property type="term" value="F:RNA polymerase II transcription regulatory region sequence-specific DNA binding"/>
    <property type="evidence" value="ECO:0007669"/>
    <property type="project" value="InterPro"/>
</dbReference>
<dbReference type="GO" id="GO:0043565">
    <property type="term" value="F:sequence-specific DNA binding"/>
    <property type="evidence" value="ECO:0000353"/>
    <property type="project" value="TAIR"/>
</dbReference>
<dbReference type="GO" id="GO:0030154">
    <property type="term" value="P:cell differentiation"/>
    <property type="evidence" value="ECO:0007669"/>
    <property type="project" value="UniProtKB-KW"/>
</dbReference>
<dbReference type="GO" id="GO:0009908">
    <property type="term" value="P:flower development"/>
    <property type="evidence" value="ECO:0007669"/>
    <property type="project" value="UniProtKB-KW"/>
</dbReference>
<dbReference type="GO" id="GO:0045892">
    <property type="term" value="P:negative regulation of DNA-templated transcription"/>
    <property type="evidence" value="ECO:0000314"/>
    <property type="project" value="TAIR"/>
</dbReference>
<dbReference type="GO" id="GO:0009910">
    <property type="term" value="P:negative regulation of flower development"/>
    <property type="evidence" value="ECO:0000315"/>
    <property type="project" value="TAIR"/>
</dbReference>
<dbReference type="GO" id="GO:0045944">
    <property type="term" value="P:positive regulation of transcription by RNA polymerase II"/>
    <property type="evidence" value="ECO:0007669"/>
    <property type="project" value="InterPro"/>
</dbReference>
<dbReference type="GO" id="GO:0009266">
    <property type="term" value="P:response to temperature stimulus"/>
    <property type="evidence" value="ECO:0000315"/>
    <property type="project" value="TAIR"/>
</dbReference>
<dbReference type="CDD" id="cd00265">
    <property type="entry name" value="MADS_MEF2_like"/>
    <property type="match status" value="1"/>
</dbReference>
<dbReference type="FunFam" id="3.40.1810.10:FF:000007">
    <property type="entry name" value="Transcription factor, MADS-box"/>
    <property type="match status" value="1"/>
</dbReference>
<dbReference type="Gene3D" id="3.40.1810.10">
    <property type="entry name" value="Transcription factor, MADS-box"/>
    <property type="match status" value="1"/>
</dbReference>
<dbReference type="InterPro" id="IPR050142">
    <property type="entry name" value="MADS-box/MEF2_TF"/>
</dbReference>
<dbReference type="InterPro" id="IPR033896">
    <property type="entry name" value="MEF2-like_N"/>
</dbReference>
<dbReference type="InterPro" id="IPR002487">
    <property type="entry name" value="TF_Kbox"/>
</dbReference>
<dbReference type="InterPro" id="IPR002100">
    <property type="entry name" value="TF_MADSbox"/>
</dbReference>
<dbReference type="InterPro" id="IPR036879">
    <property type="entry name" value="TF_MADSbox_sf"/>
</dbReference>
<dbReference type="PANTHER" id="PTHR48019">
    <property type="entry name" value="SERUM RESPONSE FACTOR HOMOLOG"/>
    <property type="match status" value="1"/>
</dbReference>
<dbReference type="Pfam" id="PF01486">
    <property type="entry name" value="K-box"/>
    <property type="match status" value="1"/>
</dbReference>
<dbReference type="Pfam" id="PF00319">
    <property type="entry name" value="SRF-TF"/>
    <property type="match status" value="1"/>
</dbReference>
<dbReference type="PRINTS" id="PR00404">
    <property type="entry name" value="MADSDOMAIN"/>
</dbReference>
<dbReference type="SMART" id="SM00432">
    <property type="entry name" value="MADS"/>
    <property type="match status" value="1"/>
</dbReference>
<dbReference type="SUPFAM" id="SSF55455">
    <property type="entry name" value="SRF-like"/>
    <property type="match status" value="1"/>
</dbReference>
<dbReference type="PROSITE" id="PS51297">
    <property type="entry name" value="K_BOX"/>
    <property type="match status" value="1"/>
</dbReference>
<dbReference type="PROSITE" id="PS00350">
    <property type="entry name" value="MADS_BOX_1"/>
    <property type="match status" value="1"/>
</dbReference>
<dbReference type="PROSITE" id="PS50066">
    <property type="entry name" value="MADS_BOX_2"/>
    <property type="match status" value="1"/>
</dbReference>
<organism>
    <name type="scientific">Arabidopsis thaliana</name>
    <name type="common">Mouse-ear cress</name>
    <dbReference type="NCBI Taxonomy" id="3702"/>
    <lineage>
        <taxon>Eukaryota</taxon>
        <taxon>Viridiplantae</taxon>
        <taxon>Streptophyta</taxon>
        <taxon>Embryophyta</taxon>
        <taxon>Tracheophyta</taxon>
        <taxon>Spermatophyta</taxon>
        <taxon>Magnoliopsida</taxon>
        <taxon>eudicotyledons</taxon>
        <taxon>Gunneridae</taxon>
        <taxon>Pentapetalae</taxon>
        <taxon>rosids</taxon>
        <taxon>malvids</taxon>
        <taxon>Brassicales</taxon>
        <taxon>Brassicaceae</taxon>
        <taxon>Camelineae</taxon>
        <taxon>Arabidopsis</taxon>
    </lineage>
</organism>
<feature type="chain" id="PRO_0000199487" description="MADS-box protein SVP">
    <location>
        <begin position="1"/>
        <end position="240"/>
    </location>
</feature>
<feature type="domain" description="MADS-box" evidence="1">
    <location>
        <begin position="3"/>
        <end position="57"/>
    </location>
</feature>
<feature type="domain" description="K-box" evidence="2">
    <location>
        <begin position="87"/>
        <end position="180"/>
    </location>
</feature>
<feature type="region of interest" description="Disordered" evidence="3">
    <location>
        <begin position="202"/>
        <end position="240"/>
    </location>
</feature>
<feature type="compositionally biased region" description="Polar residues" evidence="3">
    <location>
        <begin position="206"/>
        <end position="220"/>
    </location>
</feature>
<feature type="splice variant" id="VSP_039686" description="In isoform 3." evidence="13">
    <original>EFCSSS</original>
    <variation>D</variation>
    <location>
        <begin position="56"/>
        <end position="61"/>
    </location>
</feature>
<feature type="splice variant" id="VSP_006255" description="In isoform 2." evidence="14">
    <original>SMK</original>
    <variation>RKS</variation>
    <location>
        <begin position="61"/>
        <end position="63"/>
    </location>
</feature>
<feature type="splice variant" id="VSP_006256" description="In isoform 2." evidence="14">
    <location>
        <begin position="64"/>
        <end position="240"/>
    </location>
</feature>
<feature type="mutagenesis site" description="In svp-43; early flowering.">
    <original>VLER</original>
    <variation>G</variation>
    <location>
        <begin position="65"/>
        <end position="68"/>
    </location>
</feature>
<feature type="helix" evidence="17">
    <location>
        <begin position="95"/>
        <end position="111"/>
    </location>
</feature>
<feature type="helix" evidence="17">
    <location>
        <begin position="121"/>
        <end position="162"/>
    </location>
</feature>
<evidence type="ECO:0000255" key="1">
    <source>
        <dbReference type="PROSITE-ProRule" id="PRU00251"/>
    </source>
</evidence>
<evidence type="ECO:0000255" key="2">
    <source>
        <dbReference type="PROSITE-ProRule" id="PRU00629"/>
    </source>
</evidence>
<evidence type="ECO:0000256" key="3">
    <source>
        <dbReference type="SAM" id="MobiDB-lite"/>
    </source>
</evidence>
<evidence type="ECO:0000269" key="4">
    <source>
    </source>
</evidence>
<evidence type="ECO:0000269" key="5">
    <source>
    </source>
</evidence>
<evidence type="ECO:0000269" key="6">
    <source>
    </source>
</evidence>
<evidence type="ECO:0000269" key="7">
    <source>
    </source>
</evidence>
<evidence type="ECO:0000269" key="8">
    <source>
    </source>
</evidence>
<evidence type="ECO:0000269" key="9">
    <source>
    </source>
</evidence>
<evidence type="ECO:0000269" key="10">
    <source>
    </source>
</evidence>
<evidence type="ECO:0000269" key="11">
    <source>
    </source>
</evidence>
<evidence type="ECO:0000303" key="12">
    <source>
    </source>
</evidence>
<evidence type="ECO:0000303" key="13">
    <source ref="2"/>
</evidence>
<evidence type="ECO:0000305" key="14"/>
<evidence type="ECO:0000312" key="15">
    <source>
        <dbReference type="Araport" id="AT2G22540"/>
    </source>
</evidence>
<evidence type="ECO:0000312" key="16">
    <source>
        <dbReference type="EMBL" id="AAD22365.1"/>
    </source>
</evidence>
<evidence type="ECO:0007829" key="17">
    <source>
        <dbReference type="PDB" id="7XGS"/>
    </source>
</evidence>
<reference key="1">
    <citation type="journal article" date="2000" name="Plant J.">
        <title>Molecular cloning of SVP: a negative regulator of the floral transition in Arabidopsis.</title>
        <authorList>
            <person name="Hartmann U."/>
            <person name="Hohmann S."/>
            <person name="Nettesheim K."/>
            <person name="Wisman E."/>
            <person name="Saedler H."/>
            <person name="Huijser P."/>
        </authorList>
    </citation>
    <scope>NUCLEOTIDE SEQUENCE [MRNA] (ISOFORM 1)</scope>
    <scope>ALTERNATIVE SPLICING</scope>
    <scope>MUTANT SVP-43</scope>
    <source>
        <strain>cv. Columbia</strain>
    </source>
</reference>
<reference key="2">
    <citation type="submission" date="2007-08" db="EMBL/GenBank/DDBJ databases">
        <title>A new alternative splicing of SVP gene from Arabidopsis inflorescence.</title>
        <authorList>
            <person name="Li X."/>
            <person name="An Y."/>
        </authorList>
    </citation>
    <scope>NUCLEOTIDE SEQUENCE [LARGE SCALE MRNA] (ISOFORM 3)</scope>
    <source>
        <strain>cv. Columbia</strain>
    </source>
</reference>
<reference key="3">
    <citation type="journal article" date="1999" name="Nature">
        <title>Sequence and analysis of chromosome 2 of the plant Arabidopsis thaliana.</title>
        <authorList>
            <person name="Lin X."/>
            <person name="Kaul S."/>
            <person name="Rounsley S.D."/>
            <person name="Shea T.P."/>
            <person name="Benito M.-I."/>
            <person name="Town C.D."/>
            <person name="Fujii C.Y."/>
            <person name="Mason T.M."/>
            <person name="Bowman C.L."/>
            <person name="Barnstead M.E."/>
            <person name="Feldblyum T.V."/>
            <person name="Buell C.R."/>
            <person name="Ketchum K.A."/>
            <person name="Lee J.J."/>
            <person name="Ronning C.M."/>
            <person name="Koo H.L."/>
            <person name="Moffat K.S."/>
            <person name="Cronin L.A."/>
            <person name="Shen M."/>
            <person name="Pai G."/>
            <person name="Van Aken S."/>
            <person name="Umayam L."/>
            <person name="Tallon L.J."/>
            <person name="Gill J.E."/>
            <person name="Adams M.D."/>
            <person name="Carrera A.J."/>
            <person name="Creasy T.H."/>
            <person name="Goodman H.M."/>
            <person name="Somerville C.R."/>
            <person name="Copenhaver G.P."/>
            <person name="Preuss D."/>
            <person name="Nierman W.C."/>
            <person name="White O."/>
            <person name="Eisen J.A."/>
            <person name="Salzberg S.L."/>
            <person name="Fraser C.M."/>
            <person name="Venter J.C."/>
        </authorList>
    </citation>
    <scope>NUCLEOTIDE SEQUENCE [LARGE SCALE GENOMIC DNA]</scope>
    <source>
        <strain>cv. Columbia</strain>
    </source>
</reference>
<reference key="4">
    <citation type="journal article" date="2017" name="Plant J.">
        <title>Araport11: a complete reannotation of the Arabidopsis thaliana reference genome.</title>
        <authorList>
            <person name="Cheng C.Y."/>
            <person name="Krishnakumar V."/>
            <person name="Chan A.P."/>
            <person name="Thibaud-Nissen F."/>
            <person name="Schobel S."/>
            <person name="Town C.D."/>
        </authorList>
    </citation>
    <scope>GENOME REANNOTATION</scope>
    <source>
        <strain>cv. Columbia</strain>
    </source>
</reference>
<reference key="5">
    <citation type="journal article" date="2005" name="Plant Cell">
        <title>Comprehensive interaction map of the Arabidopsis MADS Box transcription factors.</title>
        <authorList>
            <person name="de Folter S."/>
            <person name="Immink R.G.H."/>
            <person name="Kieffer M."/>
            <person name="Parenicova L."/>
            <person name="Henz S.R."/>
            <person name="Weigel D."/>
            <person name="Busscher M."/>
            <person name="Kooiker M."/>
            <person name="Colombo L."/>
            <person name="Kater M.M."/>
            <person name="Davies B."/>
            <person name="Angenent G.C."/>
        </authorList>
    </citation>
    <scope>INTERACTION WITH AGL15</scope>
</reference>
<reference key="6">
    <citation type="journal article" date="2005" name="Plant J.">
        <title>HUA2 is required for the expression of floral repressors in Arabidopsis thaliana.</title>
        <authorList>
            <person name="Doyle M.R."/>
            <person name="Bizzell C.M."/>
            <person name="Keller M.R."/>
            <person name="Michaels S.D."/>
            <person name="Song J."/>
            <person name="Noh Y.-S."/>
            <person name="Amasino R.M."/>
        </authorList>
    </citation>
    <scope>INDUCTION BY HUA2</scope>
</reference>
<reference key="7">
    <citation type="journal article" date="2006" name="Plant Cell">
        <title>AGL24, SHORT VEGETATIVE PHASE, and APETALA1 redundantly control AGAMOUS during early stages of flower development in Arabidopsis.</title>
        <authorList>
            <person name="Gregis V."/>
            <person name="Sessa A."/>
            <person name="Colombo L."/>
            <person name="Kater M.M."/>
        </authorList>
    </citation>
    <scope>FUNCTION</scope>
    <scope>INTERACTION WITH AP1; SEU AND LUG</scope>
</reference>
<reference key="8">
    <citation type="journal article" date="2007" name="Development">
        <title>Specification of Arabidopsis floral meristem identity by repression of flowering time genes.</title>
        <authorList>
            <person name="Liu C."/>
            <person name="Zhou J."/>
            <person name="Bracha-Drori K."/>
            <person name="Yalovsky S."/>
            <person name="Ito T."/>
            <person name="Yu H."/>
        </authorList>
    </citation>
    <scope>INDUCTION BY AP1</scope>
</reference>
<reference key="9">
    <citation type="journal article" date="2008" name="Plant J.">
        <title>AGAMOUS-LIKE24 and SHORT VEGETATIVE PHASE determine floral meristem identity in Arabidopsis.</title>
        <authorList>
            <person name="Gregis V."/>
            <person name="Sessa A."/>
            <person name="Colombo L."/>
            <person name="Kater M.M."/>
        </authorList>
    </citation>
    <scope>FUNCTION</scope>
    <scope>INDUCTION</scope>
</reference>
<reference key="10">
    <citation type="journal article" date="2009" name="Plant J.">
        <title>The Arabidopsis floral meristem identity genes AP1, AGL24 and SVP directly repress class B and C floral homeotic genes.</title>
        <authorList>
            <person name="Gregis V."/>
            <person name="Sessa A."/>
            <person name="Dorca-Fornell C."/>
            <person name="Kater M.M."/>
        </authorList>
    </citation>
    <scope>FUNCTION</scope>
    <scope>SUBCELLULAR LOCATION</scope>
    <scope>TISSUE SPECIFICITY</scope>
    <scope>DEVELOPMENTAL STAGE</scope>
</reference>
<reference key="11">
    <citation type="journal article" date="2014" name="Dev. Cell">
        <title>A MYB-domain protein EFM mediates flowering responses to environmental cues in Arabidopsis.</title>
        <authorList>
            <person name="Yan Y."/>
            <person name="Shen L."/>
            <person name="Chen Y."/>
            <person name="Bao S."/>
            <person name="Thong Z."/>
            <person name="Yu H."/>
        </authorList>
    </citation>
    <scope>FUNCTION</scope>
</reference>
<reference key="12">
    <citation type="journal article" date="2014" name="Plant Cell">
        <title>miR824-regulated AGAMOUS-LIKE16 contributes to flowering time repression in Arabidopsis.</title>
        <authorList>
            <person name="Hu J.Y."/>
            <person name="Zhou Y."/>
            <person name="He F."/>
            <person name="Dong X."/>
            <person name="Liu L.Y."/>
            <person name="Coupland G."/>
            <person name="Turck F."/>
            <person name="de Meaux J."/>
        </authorList>
    </citation>
    <scope>INTERACTION WITH AGL16</scope>
</reference>
<name>SVP_ARATH</name>
<sequence length="240" mass="26896">MAREKIQIRKIDNATARQVTFSKRRRGLFKKAEELSVLCDADVALIIFSSTGKLFEFCSSSMKEVLERHNLQSKNLEKLDQPSLELQLVENSDHARMSKEIADKSHRLRQMRGEELQGLDIEELQQLEKALETGLTRVIETKSDKIMSEISELQKKGMQLMDENKRLRQQGTQLTEENERLGMQICNNVHAHGGAESENAAVYEEGQSSESITNAGNSTGAPVDSESSDTSLRLGLPYGG</sequence>
<comment type="function">
    <text evidence="6 8 9 11">Transcription repressor that inhibit floral transition in the autonomous flowering pathway, independent of photoperiod and temperature. Acts in a dosage-dependent manner. Together with AGL24 and AP1, controls the identity of the floral meristem and regulates expression of class B, C and E genes. Promotes EFM expression to suppress flowering (PubMed:25132385).</text>
</comment>
<comment type="subunit">
    <text evidence="5 6 10">Forms a heterodimer with AP1 and SVP. Interacts with the SEU-LUG corepressor complex when complexed to AP1. Interacts with AGL15 (PubMed:15805477, PubMed:16679456). Interacts with AGL16 (PubMed:24876250).</text>
</comment>
<comment type="interaction">
    <interactant intactId="EBI-592058">
        <id>Q9FVC1</id>
    </interactant>
    <interactant intactId="EBI-622067">
        <id>Q38838</id>
        <label>AGL14</label>
    </interactant>
    <organismsDiffer>false</organismsDiffer>
    <experiments>4</experiments>
</comment>
<comment type="interaction">
    <interactant intactId="EBI-592058">
        <id>Q9FVC1</id>
    </interactant>
    <interactant intactId="EBI-621986">
        <id>Q9SZJ6</id>
        <label>AGL21</label>
    </interactant>
    <organismsDiffer>false</organismsDiffer>
    <experiments>5</experiments>
</comment>
<comment type="interaction">
    <interactant intactId="EBI-592058">
        <id>Q9FVC1</id>
    </interactant>
    <interactant intactId="EBI-16074648">
        <id>Q9AT76-1</id>
        <label>AGL27</label>
    </interactant>
    <organismsDiffer>false</organismsDiffer>
    <experiments>7</experiments>
</comment>
<comment type="interaction">
    <interactant intactId="EBI-592058">
        <id>Q9FVC1</id>
    </interactant>
    <interactant intactId="EBI-621949">
        <id>P29385</id>
        <label>AGL5</label>
    </interactant>
    <organismsDiffer>false</organismsDiffer>
    <experiments>4</experiments>
</comment>
<comment type="interaction">
    <interactant intactId="EBI-592058">
        <id>Q9FVC1</id>
    </interactant>
    <interactant intactId="EBI-592003">
        <id>P35631</id>
        <label>AP1</label>
    </interactant>
    <organismsDiffer>false</organismsDiffer>
    <experiments>5</experiments>
</comment>
<comment type="interaction">
    <interactant intactId="EBI-592058">
        <id>Q9FVC1</id>
    </interactant>
    <interactant intactId="EBI-15192211">
        <id>O82343</id>
        <label>At2g46260</label>
    </interactant>
    <organismsDiffer>false</organismsDiffer>
    <experiments>3</experiments>
</comment>
<comment type="interaction">
    <interactant intactId="EBI-592058">
        <id>Q9FVC1</id>
    </interactant>
    <interactant intactId="EBI-2127872">
        <id>Q9S7Q7</id>
        <label>FLC</label>
    </interactant>
    <organismsDiffer>false</organismsDiffer>
    <experiments>4</experiments>
</comment>
<comment type="interaction">
    <interactant intactId="EBI-592058">
        <id>Q9FVC1</id>
    </interactant>
    <interactant intactId="EBI-446380">
        <id>Q9SQI2</id>
        <label>GI</label>
    </interactant>
    <organismsDiffer>false</organismsDiffer>
    <experiments>2</experiments>
</comment>
<comment type="subcellular location">
    <subcellularLocation>
        <location evidence="1 9">Nucleus</location>
    </subcellularLocation>
</comment>
<comment type="alternative products">
    <event type="alternative splicing"/>
    <isoform>
        <id>Q9FVC1-1</id>
        <name>1</name>
        <name>Long</name>
        <sequence type="displayed"/>
    </isoform>
    <isoform>
        <id>Q9FVC1-2</id>
        <name>2</name>
        <name>Short</name>
        <sequence type="described" ref="VSP_006255 VSP_006256"/>
    </isoform>
    <isoform>
        <id>Q9FVC1-3</id>
        <name>3</name>
        <sequence type="described" ref="VSP_039686"/>
    </isoform>
</comment>
<comment type="tissue specificity">
    <text evidence="9">Detected in roots and leaves. Expressed at very low levels in flowers and siliques. Present in floral meristems.</text>
</comment>
<comment type="developmental stage">
    <text evidence="9">During vegetative phase expressed in young leaves and apical meristem until early stage of bolting. Early in development of the inflorescence present in the coflorescence and flower primordia but not in the main apical meristem. Present throughout the floral meristem during early stages of flower development. Later disappears prior to emergence of sepal primordia.</text>
</comment>
<comment type="induction">
    <text evidence="4 7 8">Repressed by the floral homeotic genes AP1 and SEP3 in emerging floral meristems. Up-regulated by HUA2.</text>
</comment>
<comment type="sequence caution" evidence="14">
    <conflict type="erroneous gene model prediction">
        <sequence resource="EMBL-CDS" id="AAD22365"/>
    </conflict>
</comment>
<keyword id="KW-0002">3D-structure</keyword>
<keyword id="KW-0025">Alternative splicing</keyword>
<keyword id="KW-0217">Developmental protein</keyword>
<keyword id="KW-0221">Differentiation</keyword>
<keyword id="KW-0238">DNA-binding</keyword>
<keyword id="KW-0287">Flowering</keyword>
<keyword id="KW-0539">Nucleus</keyword>
<keyword id="KW-1185">Reference proteome</keyword>
<keyword id="KW-0678">Repressor</keyword>
<keyword id="KW-0804">Transcription</keyword>
<keyword id="KW-0805">Transcription regulation</keyword>
<accession>Q9FVC1</accession>
<accession>A7XFT9</accession>
<accession>Q9SJY1</accession>
<proteinExistence type="evidence at protein level"/>
<protein>
    <recommendedName>
        <fullName evidence="12">MADS-box protein SVP</fullName>
    </recommendedName>
    <alternativeName>
        <fullName evidence="12">Protein SHORT VEGETATIVE PHASE</fullName>
    </alternativeName>
</protein>